<evidence type="ECO:0000250" key="1"/>
<evidence type="ECO:0000305" key="2"/>
<reference key="1">
    <citation type="submission" date="1995-01" db="EMBL/GenBank/DDBJ databases">
        <authorList>
            <person name="Green B.A."/>
            <person name="Olmsted S.B."/>
            <person name="Novitsky B.K."/>
        </authorList>
    </citation>
    <scope>NUCLEOTIDE SEQUENCE [GENOMIC DNA]</scope>
    <source>
        <strain>81-0384 / LKP serotype 5</strain>
    </source>
</reference>
<proteinExistence type="inferred from homology"/>
<accession>P45990</accession>
<protein>
    <recommendedName>
        <fullName>Major fimbrial subunit</fullName>
    </recommendedName>
    <alternativeName>
        <fullName>Major pilin</fullName>
    </alternativeName>
</protein>
<sequence length="211" mass="22527">MKKTLLGSLILLAFAGNVQAADNPNPETKGKVTFYGKVVENTCKVKSGNRDMSVVLNDVGKAHLSQKGYTAMPTPFTITLEGCNANTGTKPKANKVGVYFYSWNNADKENSYTLKSTLTGTDKADNVNIQIFQENGTDAIGVADKTIDDFTHKNNGSTNSDKPTKNHISSATALNNQTGDIALHYIAQYYATGMASAGKGPTSVDFPIAYG</sequence>
<comment type="function">
    <text>Mediates adherence to oropharyngeal epithelial cells. Helps the airway colonization process.</text>
</comment>
<comment type="subcellular location">
    <subcellularLocation>
        <location>Fimbrium</location>
    </subcellularLocation>
</comment>
<comment type="similarity">
    <text evidence="2">Belongs to the fimbrial protein family.</text>
</comment>
<keyword id="KW-1015">Disulfide bond</keyword>
<keyword id="KW-0281">Fimbrium</keyword>
<keyword id="KW-0732">Signal</keyword>
<organism>
    <name type="scientific">Haemophilus influenzae</name>
    <dbReference type="NCBI Taxonomy" id="727"/>
    <lineage>
        <taxon>Bacteria</taxon>
        <taxon>Pseudomonadati</taxon>
        <taxon>Pseudomonadota</taxon>
        <taxon>Gammaproteobacteria</taxon>
        <taxon>Pasteurellales</taxon>
        <taxon>Pasteurellaceae</taxon>
        <taxon>Haemophilus</taxon>
    </lineage>
</organism>
<dbReference type="EMBL" id="U19795">
    <property type="protein sequence ID" value="AAA61764.1"/>
    <property type="molecule type" value="Genomic_DNA"/>
</dbReference>
<dbReference type="SMR" id="P45990"/>
<dbReference type="GO" id="GO:0009289">
    <property type="term" value="C:pilus"/>
    <property type="evidence" value="ECO:0007669"/>
    <property type="project" value="UniProtKB-SubCell"/>
</dbReference>
<dbReference type="GO" id="GO:0043709">
    <property type="term" value="P:cell adhesion involved in single-species biofilm formation"/>
    <property type="evidence" value="ECO:0007669"/>
    <property type="project" value="TreeGrafter"/>
</dbReference>
<dbReference type="Gene3D" id="2.60.40.1090">
    <property type="entry name" value="Fimbrial-type adhesion domain"/>
    <property type="match status" value="1"/>
</dbReference>
<dbReference type="InterPro" id="IPR000259">
    <property type="entry name" value="Adhesion_dom_fimbrial"/>
</dbReference>
<dbReference type="InterPro" id="IPR036937">
    <property type="entry name" value="Adhesion_dom_fimbrial_sf"/>
</dbReference>
<dbReference type="InterPro" id="IPR008966">
    <property type="entry name" value="Adhesion_dom_sf"/>
</dbReference>
<dbReference type="InterPro" id="IPR050263">
    <property type="entry name" value="Bact_Fimbrial_Adh_Pro"/>
</dbReference>
<dbReference type="PANTHER" id="PTHR33420:SF3">
    <property type="entry name" value="FIMBRIAL SUBUNIT ELFA"/>
    <property type="match status" value="1"/>
</dbReference>
<dbReference type="PANTHER" id="PTHR33420">
    <property type="entry name" value="FIMBRIAL SUBUNIT ELFA-RELATED"/>
    <property type="match status" value="1"/>
</dbReference>
<dbReference type="Pfam" id="PF00419">
    <property type="entry name" value="Fimbrial"/>
    <property type="match status" value="1"/>
</dbReference>
<dbReference type="SUPFAM" id="SSF49401">
    <property type="entry name" value="Bacterial adhesins"/>
    <property type="match status" value="1"/>
</dbReference>
<feature type="signal peptide" evidence="1">
    <location>
        <begin position="1"/>
        <end position="20"/>
    </location>
</feature>
<feature type="chain" id="PRO_0000009220" description="Major fimbrial subunit">
    <location>
        <begin position="21"/>
        <end position="211"/>
    </location>
</feature>
<feature type="disulfide bond" evidence="2">
    <location>
        <begin position="43"/>
        <end position="83"/>
    </location>
</feature>
<gene>
    <name type="primary">hifA</name>
</gene>
<name>HIFA5_HAEIF</name>